<keyword id="KW-0002">3D-structure</keyword>
<keyword id="KW-0966">Cell projection</keyword>
<keyword id="KW-0969">Cilium</keyword>
<keyword id="KW-0963">Cytoplasm</keyword>
<keyword id="KW-0206">Cytoskeleton</keyword>
<keyword id="KW-0282">Flagellum</keyword>
<keyword id="KW-1267">Proteomics identification</keyword>
<keyword id="KW-1185">Reference proteome</keyword>
<sequence length="121" mass="13763">MTDRNRDKKSTSPSNSDTEMKSEQLPPCVNPGNPVFSCMLDPKTLQTATSLSKPQMIMYKTNSSHYGEFLPIPQFFPCNYTPKEQVFSSHIRATGFYQNNTLNTAPDRTRTLDFPNIQHTL</sequence>
<accession>H3BRN8</accession>
<feature type="chain" id="PRO_0000423417" description="Piercer of microtubule wall 2 protein">
    <location>
        <begin position="1"/>
        <end position="121"/>
    </location>
</feature>
<feature type="region of interest" description="Disordered" evidence="3">
    <location>
        <begin position="1"/>
        <end position="29"/>
    </location>
</feature>
<feature type="compositionally biased region" description="Basic and acidic residues" evidence="3">
    <location>
        <begin position="1"/>
        <end position="10"/>
    </location>
</feature>
<feature type="sequence conflict" description="In Ref. 1; BX648577." evidence="5" ref="1">
    <original>N</original>
    <variation>K</variation>
    <location>
        <position position="5"/>
    </location>
</feature>
<feature type="sequence conflict" description="In Ref. 1; BX648577." evidence="5" ref="1">
    <original>S</original>
    <variation>G</variation>
    <location>
        <position position="10"/>
    </location>
</feature>
<organism>
    <name type="scientific">Homo sapiens</name>
    <name type="common">Human</name>
    <dbReference type="NCBI Taxonomy" id="9606"/>
    <lineage>
        <taxon>Eukaryota</taxon>
        <taxon>Metazoa</taxon>
        <taxon>Chordata</taxon>
        <taxon>Craniata</taxon>
        <taxon>Vertebrata</taxon>
        <taxon>Euteleostomi</taxon>
        <taxon>Mammalia</taxon>
        <taxon>Eutheria</taxon>
        <taxon>Euarchontoglires</taxon>
        <taxon>Primates</taxon>
        <taxon>Haplorrhini</taxon>
        <taxon>Catarrhini</taxon>
        <taxon>Hominidae</taxon>
        <taxon>Homo</taxon>
    </lineage>
</organism>
<dbReference type="EMBL" id="BX648577">
    <property type="status" value="NOT_ANNOTATED_CDS"/>
    <property type="molecule type" value="mRNA"/>
</dbReference>
<dbReference type="EMBL" id="AK130862">
    <property type="status" value="NOT_ANNOTATED_CDS"/>
    <property type="molecule type" value="mRNA"/>
</dbReference>
<dbReference type="EMBL" id="AC013355">
    <property type="status" value="NOT_ANNOTATED_CDS"/>
    <property type="molecule type" value="Genomic_DNA"/>
</dbReference>
<dbReference type="EMBL" id="CH471082">
    <property type="protein sequence ID" value="EAW77489.1"/>
    <property type="molecule type" value="Genomic_DNA"/>
</dbReference>
<dbReference type="CCDS" id="CCDS58363.1"/>
<dbReference type="RefSeq" id="NP_001185713.1">
    <property type="nucleotide sequence ID" value="NM_001198784.2"/>
</dbReference>
<dbReference type="PDB" id="7UNG">
    <property type="method" value="EM"/>
    <property type="resolution" value="3.60 A"/>
    <property type="chains" value="G=1-121"/>
</dbReference>
<dbReference type="PDB" id="8J07">
    <property type="method" value="EM"/>
    <property type="resolution" value="4.10 A"/>
    <property type="chains" value="4U/4V/4W=1-121"/>
</dbReference>
<dbReference type="PDBsum" id="7UNG"/>
<dbReference type="PDBsum" id="8J07"/>
<dbReference type="EMDB" id="EMD-26624"/>
<dbReference type="EMDB" id="EMD-35888"/>
<dbReference type="SMR" id="H3BRN8"/>
<dbReference type="BioGRID" id="126940">
    <property type="interactions" value="1"/>
</dbReference>
<dbReference type="FunCoup" id="H3BRN8">
    <property type="interactions" value="43"/>
</dbReference>
<dbReference type="IntAct" id="H3BRN8">
    <property type="interactions" value="1"/>
</dbReference>
<dbReference type="STRING" id="9606.ENSP00000456337"/>
<dbReference type="GlyGen" id="H3BRN8">
    <property type="glycosylation" value="1 site, 1 N-linked glycan (1 site)"/>
</dbReference>
<dbReference type="BioMuta" id="C15orf65"/>
<dbReference type="MassIVE" id="H3BRN8"/>
<dbReference type="PaxDb" id="9606-ENSP00000456337"/>
<dbReference type="PeptideAtlas" id="H3BRN8"/>
<dbReference type="ProteomicsDB" id="42122"/>
<dbReference type="Antibodypedia" id="73844">
    <property type="antibodies" value="5 antibodies from 5 providers"/>
</dbReference>
<dbReference type="DNASU" id="145788"/>
<dbReference type="Ensembl" id="ENST00000569691.2">
    <property type="protein sequence ID" value="ENSP00000456337.1"/>
    <property type="gene ID" value="ENSG00000261652.3"/>
</dbReference>
<dbReference type="GeneID" id="145788"/>
<dbReference type="KEGG" id="hsa:145788"/>
<dbReference type="MANE-Select" id="ENST00000569691.2">
    <property type="protein sequence ID" value="ENSP00000456337.1"/>
    <property type="RefSeq nucleotide sequence ID" value="NM_001198784.2"/>
    <property type="RefSeq protein sequence ID" value="NP_001185713.1"/>
</dbReference>
<dbReference type="UCSC" id="uc002ada.4">
    <property type="organism name" value="human"/>
</dbReference>
<dbReference type="AGR" id="HGNC:44654"/>
<dbReference type="CTD" id="145788"/>
<dbReference type="GeneCards" id="PIERCE2"/>
<dbReference type="HGNC" id="HGNC:44654">
    <property type="gene designation" value="PIERCE2"/>
</dbReference>
<dbReference type="HPA" id="ENSG00000261652">
    <property type="expression patterns" value="Low tissue specificity"/>
</dbReference>
<dbReference type="MIM" id="619669">
    <property type="type" value="gene"/>
</dbReference>
<dbReference type="neXtProt" id="NX_H3BRN8"/>
<dbReference type="OpenTargets" id="ENSG00000261652"/>
<dbReference type="VEuPathDB" id="HostDB:ENSG00000261652"/>
<dbReference type="eggNOG" id="ENOG502S7B5">
    <property type="taxonomic scope" value="Eukaryota"/>
</dbReference>
<dbReference type="GeneTree" id="ENSGT00940000154745"/>
<dbReference type="HOGENOM" id="CLU_153970_0_0_1"/>
<dbReference type="InParanoid" id="H3BRN8"/>
<dbReference type="OMA" id="QFLPCNY"/>
<dbReference type="OrthoDB" id="546383at2759"/>
<dbReference type="PAN-GO" id="H3BRN8">
    <property type="GO annotations" value="0 GO annotations based on evolutionary models"/>
</dbReference>
<dbReference type="PhylomeDB" id="H3BRN8"/>
<dbReference type="TreeFam" id="TF323876"/>
<dbReference type="PathwayCommons" id="H3BRN8"/>
<dbReference type="SignaLink" id="H3BRN8"/>
<dbReference type="BioGRID-ORCS" id="145788">
    <property type="hits" value="13 hits in 1022 CRISPR screens"/>
</dbReference>
<dbReference type="ChiTaRS" id="C15orf65">
    <property type="organism name" value="human"/>
</dbReference>
<dbReference type="GenomeRNAi" id="145788"/>
<dbReference type="Pharos" id="H3BRN8">
    <property type="development level" value="Tdark"/>
</dbReference>
<dbReference type="PRO" id="PR:H3BRN8"/>
<dbReference type="Proteomes" id="UP000005640">
    <property type="component" value="Chromosome 15"/>
</dbReference>
<dbReference type="RNAct" id="H3BRN8">
    <property type="molecule type" value="protein"/>
</dbReference>
<dbReference type="Bgee" id="ENSG00000261652">
    <property type="expression patterns" value="Expressed in male germ line stem cell (sensu Vertebrata) in testis and 161 other cell types or tissues"/>
</dbReference>
<dbReference type="GO" id="GO:0160111">
    <property type="term" value="C:axonemal A tubule inner sheath"/>
    <property type="evidence" value="ECO:0000250"/>
    <property type="project" value="UniProtKB"/>
</dbReference>
<dbReference type="GO" id="GO:0005879">
    <property type="term" value="C:axonemal microtubule"/>
    <property type="evidence" value="ECO:0000314"/>
    <property type="project" value="UniProtKB"/>
</dbReference>
<dbReference type="GO" id="GO:0036126">
    <property type="term" value="C:sperm flagellum"/>
    <property type="evidence" value="ECO:0000250"/>
    <property type="project" value="UniProtKB"/>
</dbReference>
<dbReference type="GO" id="GO:0035082">
    <property type="term" value="P:axoneme assembly"/>
    <property type="evidence" value="ECO:0000250"/>
    <property type="project" value="UniProtKB"/>
</dbReference>
<dbReference type="GO" id="GO:0003341">
    <property type="term" value="P:cilium movement"/>
    <property type="evidence" value="ECO:0000250"/>
    <property type="project" value="UniProtKB"/>
</dbReference>
<dbReference type="GO" id="GO:0007368">
    <property type="term" value="P:determination of left/right symmetry"/>
    <property type="evidence" value="ECO:0000250"/>
    <property type="project" value="UniProtKB"/>
</dbReference>
<dbReference type="GO" id="GO:0030317">
    <property type="term" value="P:flagellated sperm motility"/>
    <property type="evidence" value="ECO:0000250"/>
    <property type="project" value="UniProtKB"/>
</dbReference>
<dbReference type="InterPro" id="IPR026507">
    <property type="entry name" value="PIRC1/2"/>
</dbReference>
<dbReference type="PANTHER" id="PTHR20899">
    <property type="entry name" value="PIERCE HOMOLOG"/>
    <property type="match status" value="1"/>
</dbReference>
<dbReference type="PANTHER" id="PTHR20899:SF4">
    <property type="entry name" value="PIERCER OF MICROTUBULE WALL 2 PROTEIN"/>
    <property type="match status" value="1"/>
</dbReference>
<dbReference type="Pfam" id="PF14892">
    <property type="entry name" value="PIRC1_2"/>
    <property type="match status" value="1"/>
</dbReference>
<gene>
    <name evidence="6" type="primary">PIERCE2</name>
    <name type="synonym">C15orf65</name>
</gene>
<evidence type="ECO:0000250" key="1">
    <source>
        <dbReference type="UniProtKB" id="A0A3Q1LFK7"/>
    </source>
</evidence>
<evidence type="ECO:0000250" key="2">
    <source>
        <dbReference type="UniProtKB" id="V9GXK1"/>
    </source>
</evidence>
<evidence type="ECO:0000256" key="3">
    <source>
        <dbReference type="SAM" id="MobiDB-lite"/>
    </source>
</evidence>
<evidence type="ECO:0000269" key="4">
    <source>
    </source>
</evidence>
<evidence type="ECO:0000305" key="5"/>
<evidence type="ECO:0000312" key="6">
    <source>
        <dbReference type="HGNC" id="HGNC:44654"/>
    </source>
</evidence>
<evidence type="ECO:0007744" key="7">
    <source>
        <dbReference type="PDB" id="7UNG"/>
    </source>
</evidence>
<comment type="function">
    <text evidence="4">Microtubule inner protein involved in the attachment of outer dynein arms (ODAs) to dynein-decorated doublet microtubules (DMTs) in cilia axoneme, which is required for motile cilia beating.</text>
</comment>
<comment type="subunit">
    <text evidence="1 2">Microtubule inner protein component of sperm flagellar doublet microtubules (By similarity). Interacts with CFAP53, ODAD1 and ODAD3; the interactions link the outer dynein arms docking complex (ODA-DC) to the internal microtubule inner proteins (MIP) in cilium axoneme (By similarity).</text>
</comment>
<comment type="interaction">
    <interactant intactId="EBI-18394323">
        <id>H3BRN8</id>
    </interactant>
    <interactant intactId="EBI-2798044">
        <id>Q2TAL8</id>
        <label>QRICH1</label>
    </interactant>
    <organismsDiffer>false</organismsDiffer>
    <experiments>3</experiments>
</comment>
<comment type="subcellular location">
    <subcellularLocation>
        <location evidence="4">Cytoplasm</location>
        <location evidence="4">Cytoskeleton</location>
        <location evidence="4">Cilium axoneme</location>
    </subcellularLocation>
    <subcellularLocation>
        <location evidence="2">Cytoplasm</location>
        <location evidence="2">Cytoskeleton</location>
        <location evidence="2">Flagellum axoneme</location>
    </subcellularLocation>
</comment>
<comment type="tissue specificity">
    <text evidence="4">Expressed in airway epithelial cells.</text>
</comment>
<comment type="similarity">
    <text evidence="5">Belongs to the PIERCE2 family.</text>
</comment>
<name>PIRC2_HUMAN</name>
<protein>
    <recommendedName>
        <fullName evidence="5">Piercer of microtubule wall 2 protein</fullName>
    </recommendedName>
</protein>
<reference key="1">
    <citation type="journal article" date="2001" name="Genome Res.">
        <title>Towards a catalog of human genes and proteins: sequencing and analysis of 500 novel complete protein coding human cDNAs.</title>
        <authorList>
            <person name="Wiemann S."/>
            <person name="Weil B."/>
            <person name="Wellenreuther R."/>
            <person name="Gassenhuber J."/>
            <person name="Glassl S."/>
            <person name="Ansorge W."/>
            <person name="Boecher M."/>
            <person name="Bloecker H."/>
            <person name="Bauersachs S."/>
            <person name="Blum H."/>
            <person name="Lauber J."/>
            <person name="Duesterhoeft A."/>
            <person name="Beyer A."/>
            <person name="Koehrer K."/>
            <person name="Strack N."/>
            <person name="Mewes H.-W."/>
            <person name="Ottenwaelder B."/>
            <person name="Obermaier B."/>
            <person name="Tampe J."/>
            <person name="Heubner D."/>
            <person name="Wambutt R."/>
            <person name="Korn B."/>
            <person name="Klein M."/>
            <person name="Poustka A."/>
        </authorList>
    </citation>
    <scope>NUCLEOTIDE SEQUENCE [LARGE SCALE MRNA]</scope>
    <source>
        <tissue>Endometrium</tissue>
    </source>
</reference>
<reference key="2">
    <citation type="journal article" date="2004" name="Nat. Genet.">
        <title>Complete sequencing and characterization of 21,243 full-length human cDNAs.</title>
        <authorList>
            <person name="Ota T."/>
            <person name="Suzuki Y."/>
            <person name="Nishikawa T."/>
            <person name="Otsuki T."/>
            <person name="Sugiyama T."/>
            <person name="Irie R."/>
            <person name="Wakamatsu A."/>
            <person name="Hayashi K."/>
            <person name="Sato H."/>
            <person name="Nagai K."/>
            <person name="Kimura K."/>
            <person name="Makita H."/>
            <person name="Sekine M."/>
            <person name="Obayashi M."/>
            <person name="Nishi T."/>
            <person name="Shibahara T."/>
            <person name="Tanaka T."/>
            <person name="Ishii S."/>
            <person name="Yamamoto J."/>
            <person name="Saito K."/>
            <person name="Kawai Y."/>
            <person name="Isono Y."/>
            <person name="Nakamura Y."/>
            <person name="Nagahari K."/>
            <person name="Murakami K."/>
            <person name="Yasuda T."/>
            <person name="Iwayanagi T."/>
            <person name="Wagatsuma M."/>
            <person name="Shiratori A."/>
            <person name="Sudo H."/>
            <person name="Hosoiri T."/>
            <person name="Kaku Y."/>
            <person name="Kodaira H."/>
            <person name="Kondo H."/>
            <person name="Sugawara M."/>
            <person name="Takahashi M."/>
            <person name="Kanda K."/>
            <person name="Yokoi T."/>
            <person name="Furuya T."/>
            <person name="Kikkawa E."/>
            <person name="Omura Y."/>
            <person name="Abe K."/>
            <person name="Kamihara K."/>
            <person name="Katsuta N."/>
            <person name="Sato K."/>
            <person name="Tanikawa M."/>
            <person name="Yamazaki M."/>
            <person name="Ninomiya K."/>
            <person name="Ishibashi T."/>
            <person name="Yamashita H."/>
            <person name="Murakawa K."/>
            <person name="Fujimori K."/>
            <person name="Tanai H."/>
            <person name="Kimata M."/>
            <person name="Watanabe M."/>
            <person name="Hiraoka S."/>
            <person name="Chiba Y."/>
            <person name="Ishida S."/>
            <person name="Ono Y."/>
            <person name="Takiguchi S."/>
            <person name="Watanabe S."/>
            <person name="Yosida M."/>
            <person name="Hotuta T."/>
            <person name="Kusano J."/>
            <person name="Kanehori K."/>
            <person name="Takahashi-Fujii A."/>
            <person name="Hara H."/>
            <person name="Tanase T.-O."/>
            <person name="Nomura Y."/>
            <person name="Togiya S."/>
            <person name="Komai F."/>
            <person name="Hara R."/>
            <person name="Takeuchi K."/>
            <person name="Arita M."/>
            <person name="Imose N."/>
            <person name="Musashino K."/>
            <person name="Yuuki H."/>
            <person name="Oshima A."/>
            <person name="Sasaki N."/>
            <person name="Aotsuka S."/>
            <person name="Yoshikawa Y."/>
            <person name="Matsunawa H."/>
            <person name="Ichihara T."/>
            <person name="Shiohata N."/>
            <person name="Sano S."/>
            <person name="Moriya S."/>
            <person name="Momiyama H."/>
            <person name="Satoh N."/>
            <person name="Takami S."/>
            <person name="Terashima Y."/>
            <person name="Suzuki O."/>
            <person name="Nakagawa S."/>
            <person name="Senoh A."/>
            <person name="Mizoguchi H."/>
            <person name="Goto Y."/>
            <person name="Shimizu F."/>
            <person name="Wakebe H."/>
            <person name="Hishigaki H."/>
            <person name="Watanabe T."/>
            <person name="Sugiyama A."/>
            <person name="Takemoto M."/>
            <person name="Kawakami B."/>
            <person name="Yamazaki M."/>
            <person name="Watanabe K."/>
            <person name="Kumagai A."/>
            <person name="Itakura S."/>
            <person name="Fukuzumi Y."/>
            <person name="Fujimori Y."/>
            <person name="Komiyama M."/>
            <person name="Tashiro H."/>
            <person name="Tanigami A."/>
            <person name="Fujiwara T."/>
            <person name="Ono T."/>
            <person name="Yamada K."/>
            <person name="Fujii Y."/>
            <person name="Ozaki K."/>
            <person name="Hirao M."/>
            <person name="Ohmori Y."/>
            <person name="Kawabata A."/>
            <person name="Hikiji T."/>
            <person name="Kobatake N."/>
            <person name="Inagaki H."/>
            <person name="Ikema Y."/>
            <person name="Okamoto S."/>
            <person name="Okitani R."/>
            <person name="Kawakami T."/>
            <person name="Noguchi S."/>
            <person name="Itoh T."/>
            <person name="Shigeta K."/>
            <person name="Senba T."/>
            <person name="Matsumura K."/>
            <person name="Nakajima Y."/>
            <person name="Mizuno T."/>
            <person name="Morinaga M."/>
            <person name="Sasaki M."/>
            <person name="Togashi T."/>
            <person name="Oyama M."/>
            <person name="Hata H."/>
            <person name="Watanabe M."/>
            <person name="Komatsu T."/>
            <person name="Mizushima-Sugano J."/>
            <person name="Satoh T."/>
            <person name="Shirai Y."/>
            <person name="Takahashi Y."/>
            <person name="Nakagawa K."/>
            <person name="Okumura K."/>
            <person name="Nagase T."/>
            <person name="Nomura N."/>
            <person name="Kikuchi H."/>
            <person name="Masuho Y."/>
            <person name="Yamashita R."/>
            <person name="Nakai K."/>
            <person name="Yada T."/>
            <person name="Nakamura Y."/>
            <person name="Ohara O."/>
            <person name="Isogai T."/>
            <person name="Sugano S."/>
        </authorList>
    </citation>
    <scope>NUCLEOTIDE SEQUENCE [LARGE SCALE MRNA]</scope>
    <source>
        <tissue>Testis</tissue>
    </source>
</reference>
<reference key="3">
    <citation type="journal article" date="2006" name="Nature">
        <title>Analysis of the DNA sequence and duplication history of human chromosome 15.</title>
        <authorList>
            <person name="Zody M.C."/>
            <person name="Garber M."/>
            <person name="Sharpe T."/>
            <person name="Young S.K."/>
            <person name="Rowen L."/>
            <person name="O'Neill K."/>
            <person name="Whittaker C.A."/>
            <person name="Kamal M."/>
            <person name="Chang J.L."/>
            <person name="Cuomo C.A."/>
            <person name="Dewar K."/>
            <person name="FitzGerald M.G."/>
            <person name="Kodira C.D."/>
            <person name="Madan A."/>
            <person name="Qin S."/>
            <person name="Yang X."/>
            <person name="Abbasi N."/>
            <person name="Abouelleil A."/>
            <person name="Arachchi H.M."/>
            <person name="Baradarani L."/>
            <person name="Birditt B."/>
            <person name="Bloom S."/>
            <person name="Bloom T."/>
            <person name="Borowsky M.L."/>
            <person name="Burke J."/>
            <person name="Butler J."/>
            <person name="Cook A."/>
            <person name="DeArellano K."/>
            <person name="DeCaprio D."/>
            <person name="Dorris L. III"/>
            <person name="Dors M."/>
            <person name="Eichler E.E."/>
            <person name="Engels R."/>
            <person name="Fahey J."/>
            <person name="Fleetwood P."/>
            <person name="Friedman C."/>
            <person name="Gearin G."/>
            <person name="Hall J.L."/>
            <person name="Hensley G."/>
            <person name="Johnson E."/>
            <person name="Jones C."/>
            <person name="Kamat A."/>
            <person name="Kaur A."/>
            <person name="Locke D.P."/>
            <person name="Madan A."/>
            <person name="Munson G."/>
            <person name="Jaffe D.B."/>
            <person name="Lui A."/>
            <person name="Macdonald P."/>
            <person name="Mauceli E."/>
            <person name="Naylor J.W."/>
            <person name="Nesbitt R."/>
            <person name="Nicol R."/>
            <person name="O'Leary S.B."/>
            <person name="Ratcliffe A."/>
            <person name="Rounsley S."/>
            <person name="She X."/>
            <person name="Sneddon K.M.B."/>
            <person name="Stewart S."/>
            <person name="Sougnez C."/>
            <person name="Stone S.M."/>
            <person name="Topham K."/>
            <person name="Vincent D."/>
            <person name="Wang S."/>
            <person name="Zimmer A.R."/>
            <person name="Birren B.W."/>
            <person name="Hood L."/>
            <person name="Lander E.S."/>
            <person name="Nusbaum C."/>
        </authorList>
    </citation>
    <scope>NUCLEOTIDE SEQUENCE [LARGE SCALE GENOMIC DNA]</scope>
</reference>
<reference key="4">
    <citation type="submission" date="2005-07" db="EMBL/GenBank/DDBJ databases">
        <authorList>
            <person name="Mural R.J."/>
            <person name="Istrail S."/>
            <person name="Sutton G.G."/>
            <person name="Florea L."/>
            <person name="Halpern A.L."/>
            <person name="Mobarry C.M."/>
            <person name="Lippert R."/>
            <person name="Walenz B."/>
            <person name="Shatkay H."/>
            <person name="Dew I."/>
            <person name="Miller J.R."/>
            <person name="Flanigan M.J."/>
            <person name="Edwards N.J."/>
            <person name="Bolanos R."/>
            <person name="Fasulo D."/>
            <person name="Halldorsson B.V."/>
            <person name="Hannenhalli S."/>
            <person name="Turner R."/>
            <person name="Yooseph S."/>
            <person name="Lu F."/>
            <person name="Nusskern D.R."/>
            <person name="Shue B.C."/>
            <person name="Zheng X.H."/>
            <person name="Zhong F."/>
            <person name="Delcher A.L."/>
            <person name="Huson D.H."/>
            <person name="Kravitz S.A."/>
            <person name="Mouchard L."/>
            <person name="Reinert K."/>
            <person name="Remington K.A."/>
            <person name="Clark A.G."/>
            <person name="Waterman M.S."/>
            <person name="Eichler E.E."/>
            <person name="Adams M.D."/>
            <person name="Hunkapiller M.W."/>
            <person name="Myers E.W."/>
            <person name="Venter J.C."/>
        </authorList>
    </citation>
    <scope>NUCLEOTIDE SEQUENCE [LARGE SCALE GENOMIC DNA]</scope>
</reference>
<reference evidence="7" key="5">
    <citation type="journal article" date="2022" name="Proc. Natl. Acad. Sci. U.S.A.">
        <title>SPACA9 is a lumenal protein of human ciliary singlet and doublet microtubules.</title>
        <authorList>
            <person name="Gui M."/>
            <person name="Croft J.T."/>
            <person name="Zabeo D."/>
            <person name="Acharya V."/>
            <person name="Kollman J.M."/>
            <person name="Burgoyne T."/>
            <person name="Hoog J.L."/>
            <person name="Brown A."/>
        </authorList>
    </citation>
    <scope>STRUCTURE BY ELECTRON MICROSCOPY (3.60 ANGSTROMS)</scope>
    <scope>FUNCTION</scope>
    <scope>SUBCELLULAR LOCATION</scope>
    <scope>TISSUE SPECIFICITY</scope>
</reference>
<proteinExistence type="evidence at protein level"/>